<gene>
    <name type="primary">HAMP</name>
</gene>
<organism>
    <name type="scientific">Canis lupus familiaris</name>
    <name type="common">Dog</name>
    <name type="synonym">Canis familiaris</name>
    <dbReference type="NCBI Taxonomy" id="9615"/>
    <lineage>
        <taxon>Eukaryota</taxon>
        <taxon>Metazoa</taxon>
        <taxon>Chordata</taxon>
        <taxon>Craniata</taxon>
        <taxon>Vertebrata</taxon>
        <taxon>Euteleostomi</taxon>
        <taxon>Mammalia</taxon>
        <taxon>Eutheria</taxon>
        <taxon>Laurasiatheria</taxon>
        <taxon>Carnivora</taxon>
        <taxon>Caniformia</taxon>
        <taxon>Canidae</taxon>
        <taxon>Canis</taxon>
    </lineage>
</organism>
<dbReference type="EMBL" id="AY772532">
    <property type="protein sequence ID" value="AAV40979.1"/>
    <property type="molecule type" value="mRNA"/>
</dbReference>
<dbReference type="EMBL" id="AY899807">
    <property type="protein sequence ID" value="AAW82336.1"/>
    <property type="molecule type" value="mRNA"/>
</dbReference>
<dbReference type="RefSeq" id="NP_001007141.1">
    <property type="nucleotide sequence ID" value="NM_001007140.1"/>
</dbReference>
<dbReference type="SMR" id="Q5U9D2"/>
<dbReference type="FunCoup" id="Q5U9D2">
    <property type="interactions" value="42"/>
</dbReference>
<dbReference type="STRING" id="9615.ENSCAFP00000010474"/>
<dbReference type="PaxDb" id="9612-ENSCAFP00000010474"/>
<dbReference type="GeneID" id="492281"/>
<dbReference type="KEGG" id="cfa:492281"/>
<dbReference type="CTD" id="57817"/>
<dbReference type="eggNOG" id="ENOG502T0FU">
    <property type="taxonomic scope" value="Eukaryota"/>
</dbReference>
<dbReference type="InParanoid" id="Q5U9D2"/>
<dbReference type="Proteomes" id="UP000002254">
    <property type="component" value="Unplaced"/>
</dbReference>
<dbReference type="Proteomes" id="UP000694429">
    <property type="component" value="Unplaced"/>
</dbReference>
<dbReference type="Proteomes" id="UP000694542">
    <property type="component" value="Unplaced"/>
</dbReference>
<dbReference type="Proteomes" id="UP000805418">
    <property type="component" value="Unplaced"/>
</dbReference>
<dbReference type="GO" id="GO:0005615">
    <property type="term" value="C:extracellular space"/>
    <property type="evidence" value="ECO:0000318"/>
    <property type="project" value="GO_Central"/>
</dbReference>
<dbReference type="GO" id="GO:0005179">
    <property type="term" value="F:hormone activity"/>
    <property type="evidence" value="ECO:0007669"/>
    <property type="project" value="UniProtKB-KW"/>
</dbReference>
<dbReference type="GO" id="GO:0042742">
    <property type="term" value="P:defense response to bacterium"/>
    <property type="evidence" value="ECO:0000318"/>
    <property type="project" value="GO_Central"/>
</dbReference>
<dbReference type="GO" id="GO:0006879">
    <property type="term" value="P:intracellular iron ion homeostasis"/>
    <property type="evidence" value="ECO:0000318"/>
    <property type="project" value="GO_Central"/>
</dbReference>
<dbReference type="GO" id="GO:0034760">
    <property type="term" value="P:negative regulation of iron ion transmembrane transport"/>
    <property type="evidence" value="ECO:0000318"/>
    <property type="project" value="GO_Central"/>
</dbReference>
<dbReference type="InterPro" id="IPR010500">
    <property type="entry name" value="Hepcidin"/>
</dbReference>
<dbReference type="PANTHER" id="PTHR16877">
    <property type="entry name" value="HEPCIDIN"/>
    <property type="match status" value="1"/>
</dbReference>
<dbReference type="PANTHER" id="PTHR16877:SF0">
    <property type="entry name" value="HEPCIDIN"/>
    <property type="match status" value="1"/>
</dbReference>
<dbReference type="Pfam" id="PF06446">
    <property type="entry name" value="Hepcidin"/>
    <property type="match status" value="1"/>
</dbReference>
<sequence>MALSTRIQAACLLLLLLASVASVSVLPHQTGQLTDLRAQDTAGAEAGLQPTLQLRRLRRRDTHFPICIFCCGCCKTPKCGLCCKT</sequence>
<protein>
    <recommendedName>
        <fullName>Hepcidin</fullName>
    </recommendedName>
</protein>
<proteinExistence type="inferred from homology"/>
<evidence type="ECO:0000250" key="1"/>
<evidence type="ECO:0000250" key="2">
    <source>
        <dbReference type="UniProtKB" id="P81172"/>
    </source>
</evidence>
<evidence type="ECO:0000255" key="3"/>
<evidence type="ECO:0000305" key="4"/>
<name>HEPC_CANLF</name>
<comment type="function">
    <text evidence="2">Liver-produced hormone that constitutes the main circulating regulator of iron absorption and distribution across tissues. Acts by promoting endocytosis and degradation of ferroportin/SLC40A1, leading to the retention of iron in iron-exporting cells and decreased flow of iron into plasma. Controls the major flows of iron into plasma: absorption of dietary iron in the intestine, recycling of iron by macrophages, which phagocytose old erythrocytes and other cells, and mobilization of stored iron from hepatocytes.</text>
</comment>
<comment type="function">
    <text evidence="2">Has strong antimicrobial activity against E.coli ML35P N.cinerea and weaker against S.epidermidis, S.aureus and group b streptococcus bacteria. Active against the fungus C.albicans. No activity against P.aeruginosa.</text>
</comment>
<comment type="subunit">
    <text evidence="2">Interacts with SLC40A1; this interaction promotes SLC40A1 rapid ubiquitination.</text>
</comment>
<comment type="subcellular location">
    <subcellularLocation>
        <location>Secreted</location>
    </subcellularLocation>
</comment>
<comment type="similarity">
    <text evidence="4">Belongs to the hepcidin family.</text>
</comment>
<accession>Q5U9D2</accession>
<accession>Q5EES0</accession>
<reference key="1">
    <citation type="submission" date="2004-10" db="EMBL/GenBank/DDBJ databases">
        <title>Identification of dog hepcidin.</title>
        <authorList>
            <person name="Shi J."/>
            <person name="Wei Y."/>
            <person name="Boothe D."/>
        </authorList>
    </citation>
    <scope>NUCLEOTIDE SEQUENCE [MRNA]</scope>
    <source>
        <tissue>Liver</tissue>
    </source>
</reference>
<reference key="2">
    <citation type="submission" date="2005-01" db="EMBL/GenBank/DDBJ databases">
        <title>Identification of dog hepcidin in China.</title>
        <authorList>
            <person name="Li X.D."/>
            <person name="Zhao T.Z."/>
            <person name="Sun M."/>
            <person name="Tian K.G."/>
            <person name="Chen X.Z."/>
        </authorList>
    </citation>
    <scope>NUCLEOTIDE SEQUENCE [MRNA]</scope>
</reference>
<keyword id="KW-0044">Antibiotic</keyword>
<keyword id="KW-0929">Antimicrobial</keyword>
<keyword id="KW-0165">Cleavage on pair of basic residues</keyword>
<keyword id="KW-1015">Disulfide bond</keyword>
<keyword id="KW-0372">Hormone</keyword>
<keyword id="KW-1185">Reference proteome</keyword>
<keyword id="KW-0964">Secreted</keyword>
<keyword id="KW-0732">Signal</keyword>
<feature type="signal peptide" evidence="3">
    <location>
        <begin position="1"/>
        <end position="22"/>
    </location>
</feature>
<feature type="propeptide" id="PRO_0000013376" evidence="3">
    <location>
        <begin position="23"/>
        <end position="54"/>
    </location>
</feature>
<feature type="peptide" id="PRO_0000013377" description="Hepcidin">
    <location>
        <begin position="61"/>
        <end position="85"/>
    </location>
</feature>
<feature type="disulfide bond" evidence="1">
    <location>
        <begin position="67"/>
        <end position="83"/>
    </location>
</feature>
<feature type="disulfide bond" evidence="1">
    <location>
        <begin position="70"/>
        <end position="73"/>
    </location>
</feature>
<feature type="disulfide bond" evidence="1">
    <location>
        <begin position="71"/>
        <end position="79"/>
    </location>
</feature>
<feature type="disulfide bond" evidence="1">
    <location>
        <begin position="74"/>
        <end position="82"/>
    </location>
</feature>
<feature type="sequence conflict" description="In Ref. 2; AAW82336." evidence="4" ref="2">
    <original>L</original>
    <variation>F</variation>
    <location>
        <position position="81"/>
    </location>
</feature>